<proteinExistence type="evidence at transcript level"/>
<organism>
    <name type="scientific">Irkut virus</name>
    <name type="common">IRKV</name>
    <dbReference type="NCBI Taxonomy" id="249583"/>
    <lineage>
        <taxon>Viruses</taxon>
        <taxon>Riboviria</taxon>
        <taxon>Orthornavirae</taxon>
        <taxon>Negarnaviricota</taxon>
        <taxon>Haploviricotina</taxon>
        <taxon>Monjiviricetes</taxon>
        <taxon>Mononegavirales</taxon>
        <taxon>Rhabdoviridae</taxon>
        <taxon>Alpharhabdovirinae</taxon>
        <taxon>Lyssavirus</taxon>
    </lineage>
</organism>
<organismHost>
    <name type="scientific">Murina leucogaster</name>
    <name type="common">Greater tube-nosed bat</name>
    <dbReference type="NCBI Taxonomy" id="187017"/>
</organismHost>
<name>NCAP_IRKV</name>
<evidence type="ECO:0000250" key="1"/>
<evidence type="ECO:0000305" key="2"/>
<reference key="1">
    <citation type="journal article" date="2005" name="Virus Res.">
        <title>Phylogenetic relationships of Irkut and West Caucasian bat viruses within the Lyssavirus genus and suggested quantitative criteria based on the N gene sequence for lyssavirus genotype definition.</title>
        <authorList>
            <person name="Kuzmin I.V."/>
            <person name="Hughes G.J."/>
            <person name="Botvinkin A.D."/>
            <person name="Orciari L.A."/>
            <person name="Rupprecht C.E."/>
        </authorList>
    </citation>
    <scope>NUCLEOTIDE SEQUENCE [MRNA]</scope>
</reference>
<reference key="2">
    <citation type="journal article" date="2008" name="Virus Res.">
        <title>Complete genomes of Aravan, Khujand, Irkut and West Caucasian bat viruses, with special attention to the polymerase gene and non-coding regions.</title>
        <authorList>
            <person name="Kuzmin I.V."/>
            <person name="Wu X."/>
            <person name="Tordo N."/>
            <person name="Rupprecht C.E."/>
        </authorList>
    </citation>
    <scope>NUCLEOTIDE SEQUENCE [GENOMIC RNA]</scope>
</reference>
<accession>Q5VKP6</accession>
<sequence length="451" mass="50873">MDSDRIVFKVHNQLVSLKPEVISDQYEYKYPAIDDKKKPSITLGKAPDLKTAYKSILSGMNAAKLDPDDVCSYLAAAMVFFEGICPEDWTSYGINIAKKGDKITPAVLVDIQRTNTEGNWAQAGGQDLTRDPTTPEHASLVGLLLCLYRLSKIVGQNTGNYKTNVAERMEQIFETAPFVKIVEHHTLMTTHKMCANWSTIPNFRFLAGVYDMFFSRIEHLYSAIRVGTVVTAYEDCSGLVSFTTFIRQINLTARDAVLYFFHKNFEEEIKRMFEPGQETAVPHSYFIHFRSLGLSGKSPYSSNAVGHTFNLIHFVGCYMGQVRSLNATVIQSCAPHEMSVLGGYLGEEFFGRGTFERRFFRDEKELQDYEAAEATKIDLALEDDGTVNSDDEDFFSGETRSPEAVYSRIMMSGGRLKKSHIKRYISVSSNHQARPNSFAEFLNKTYASDTR</sequence>
<comment type="function">
    <text evidence="1">Encapsidates the genome in a ratio of one protein N per nine ribonucleotides, protecting it from nucleases. If expressed without protein P it binds non-specifically RNA and therefore can bind it's own mRNA. Interaction with protein P abolishes any non-specific RNA binding, and prevents phosphorylation. The soluble N-P complex encapsidates specifically the genomic RNA, with protein N protecting the genome like a pearl necklace. The encapsidated genomic RNA is termed the nucleocapsid (NC) and serves as template for viral transcription and replication. Protein N binds protein P in the NC through a different interaction, and can be phosphorylated. Subsequent viral replication is dependent on intracellular concentration of newly synthesized protein N. During replication, encapsidation by protein N is coupled to RNA synthesis and all replicative products are resistant to nucleases (By similarity).</text>
</comment>
<comment type="subunit">
    <text evidence="1">Homomultimerizes to form the nucleocapsid. Binds to viral genomic RNA. In nucleocapsid, binds protein P and thereby positions the polymerase on the template. Protein P acts as a chaperone on free protein N to prevent it from aggregation before encapsidating genomic RNA (By similarity).</text>
</comment>
<comment type="subcellular location">
    <subcellularLocation>
        <location>Virion</location>
    </subcellularLocation>
    <subcellularLocation>
        <location evidence="1">Host cytoplasm</location>
    </subcellularLocation>
</comment>
<comment type="PTM">
    <text evidence="1">Phosphorylated by host CK2. Unphosphorylated protein N seems to have a better affinity for leader viral promoter encapsidation. Phosphorylation of protein N in ribonucleocapsid may stabilize the interaction with protein P, thereby playing an important role in viral transcription/replication (By similarity).</text>
</comment>
<comment type="miscellaneous">
    <text evidence="1">Displays a superantigen activity in human and mouse, activating mostly V-beta-8 subtypes of T-cell receptor.</text>
</comment>
<comment type="similarity">
    <text evidence="2">Belongs to the lyssavirus nucleocapsid protein family.</text>
</comment>
<protein>
    <recommendedName>
        <fullName>Nucleoprotein</fullName>
        <shortName>NP</shortName>
    </recommendedName>
    <alternativeName>
        <fullName>Nucleocapsid protein</fullName>
        <shortName>Protein N</shortName>
    </alternativeName>
</protein>
<gene>
    <name type="primary">N</name>
</gene>
<dbReference type="EMBL" id="EF614260">
    <property type="protein sequence ID" value="AAR03477.1"/>
    <property type="molecule type" value="mRNA"/>
</dbReference>
<dbReference type="RefSeq" id="YP_007641397.1">
    <property type="nucleotide sequence ID" value="NC_020809.1"/>
</dbReference>
<dbReference type="SMR" id="Q5VKP6"/>
<dbReference type="GeneID" id="14857936"/>
<dbReference type="KEGG" id="vg:14857936"/>
<dbReference type="OrthoDB" id="22890at10239"/>
<dbReference type="Proteomes" id="UP000008381">
    <property type="component" value="Segment"/>
</dbReference>
<dbReference type="GO" id="GO:0019029">
    <property type="term" value="C:helical viral capsid"/>
    <property type="evidence" value="ECO:0007669"/>
    <property type="project" value="UniProtKB-KW"/>
</dbReference>
<dbReference type="GO" id="GO:0030430">
    <property type="term" value="C:host cell cytoplasm"/>
    <property type="evidence" value="ECO:0007669"/>
    <property type="project" value="UniProtKB-SubCell"/>
</dbReference>
<dbReference type="GO" id="GO:1990904">
    <property type="term" value="C:ribonucleoprotein complex"/>
    <property type="evidence" value="ECO:0007669"/>
    <property type="project" value="UniProtKB-KW"/>
</dbReference>
<dbReference type="GO" id="GO:0019013">
    <property type="term" value="C:viral nucleocapsid"/>
    <property type="evidence" value="ECO:0007669"/>
    <property type="project" value="UniProtKB-KW"/>
</dbReference>
<dbReference type="GO" id="GO:0003723">
    <property type="term" value="F:RNA binding"/>
    <property type="evidence" value="ECO:0007669"/>
    <property type="project" value="UniProtKB-KW"/>
</dbReference>
<dbReference type="Gene3D" id="1.10.3610.10">
    <property type="entry name" value="Nucleoprotein"/>
    <property type="match status" value="1"/>
</dbReference>
<dbReference type="Gene3D" id="1.10.3570.10">
    <property type="entry name" value="Rhabdovirus nucleocapsid protein like domain"/>
    <property type="match status" value="1"/>
</dbReference>
<dbReference type="InterPro" id="IPR000448">
    <property type="entry name" value="Rhabdo_ncapsid"/>
</dbReference>
<dbReference type="InterPro" id="IPR023331">
    <property type="entry name" value="Rhabdovirus_ncapsid_C"/>
</dbReference>
<dbReference type="InterPro" id="IPR023330">
    <property type="entry name" value="Rhabdovirus_ncapsid_N"/>
</dbReference>
<dbReference type="InterPro" id="IPR035961">
    <property type="entry name" value="Rhabdovirus_nucleoprotein-like"/>
</dbReference>
<dbReference type="Pfam" id="PF00945">
    <property type="entry name" value="Rhabdo_ncap"/>
    <property type="match status" value="1"/>
</dbReference>
<dbReference type="SUPFAM" id="SSF140809">
    <property type="entry name" value="Rhabdovirus nucleoprotein-like"/>
    <property type="match status" value="1"/>
</dbReference>
<keyword id="KW-0167">Capsid protein</keyword>
<keyword id="KW-1139">Helical capsid protein</keyword>
<keyword id="KW-1035">Host cytoplasm</keyword>
<keyword id="KW-0597">Phosphoprotein</keyword>
<keyword id="KW-0687">Ribonucleoprotein</keyword>
<keyword id="KW-0694">RNA-binding</keyword>
<keyword id="KW-0766">Superantigen</keyword>
<keyword id="KW-0543">Viral nucleoprotein</keyword>
<keyword id="KW-0946">Virion</keyword>
<feature type="chain" id="PRO_0000295203" description="Nucleoprotein">
    <location>
        <begin position="1"/>
        <end position="451"/>
    </location>
</feature>
<feature type="modified residue" description="Phosphoserine; by host CK2" evidence="1">
    <location>
        <position position="389"/>
    </location>
</feature>